<feature type="chain" id="PRO_1000050288" description="4-hydroxy-tetrahydrodipicolinate synthase">
    <location>
        <begin position="1"/>
        <end position="302"/>
    </location>
</feature>
<feature type="active site" description="Proton donor/acceptor" evidence="1">
    <location>
        <position position="144"/>
    </location>
</feature>
<feature type="active site" description="Schiff-base intermediate with substrate" evidence="1">
    <location>
        <position position="172"/>
    </location>
</feature>
<feature type="binding site" evidence="1">
    <location>
        <position position="55"/>
    </location>
    <ligand>
        <name>pyruvate</name>
        <dbReference type="ChEBI" id="CHEBI:15361"/>
    </ligand>
</feature>
<feature type="binding site" evidence="1">
    <location>
        <position position="214"/>
    </location>
    <ligand>
        <name>pyruvate</name>
        <dbReference type="ChEBI" id="CHEBI:15361"/>
    </ligand>
</feature>
<feature type="site" description="Part of a proton relay during catalysis" evidence="1">
    <location>
        <position position="54"/>
    </location>
</feature>
<feature type="site" description="Part of a proton relay during catalysis" evidence="1">
    <location>
        <position position="117"/>
    </location>
</feature>
<keyword id="KW-0028">Amino-acid biosynthesis</keyword>
<keyword id="KW-0963">Cytoplasm</keyword>
<keyword id="KW-0220">Diaminopimelate biosynthesis</keyword>
<keyword id="KW-0456">Lyase</keyword>
<keyword id="KW-0457">Lysine biosynthesis</keyword>
<keyword id="KW-1185">Reference proteome</keyword>
<keyword id="KW-0704">Schiff base</keyword>
<comment type="function">
    <text evidence="1">Catalyzes the condensation of (S)-aspartate-beta-semialdehyde [(S)-ASA] and pyruvate to 4-hydroxy-tetrahydrodipicolinate (HTPA).</text>
</comment>
<comment type="catalytic activity">
    <reaction evidence="1">
        <text>L-aspartate 4-semialdehyde + pyruvate = (2S,4S)-4-hydroxy-2,3,4,5-tetrahydrodipicolinate + H2O + H(+)</text>
        <dbReference type="Rhea" id="RHEA:34171"/>
        <dbReference type="ChEBI" id="CHEBI:15361"/>
        <dbReference type="ChEBI" id="CHEBI:15377"/>
        <dbReference type="ChEBI" id="CHEBI:15378"/>
        <dbReference type="ChEBI" id="CHEBI:67139"/>
        <dbReference type="ChEBI" id="CHEBI:537519"/>
        <dbReference type="EC" id="4.3.3.7"/>
    </reaction>
</comment>
<comment type="pathway">
    <text evidence="1">Amino-acid biosynthesis; L-lysine biosynthesis via DAP pathway; (S)-tetrahydrodipicolinate from L-aspartate: step 3/4.</text>
</comment>
<comment type="subunit">
    <text evidence="1">Homotetramer; dimer of dimers.</text>
</comment>
<comment type="subcellular location">
    <subcellularLocation>
        <location evidence="1">Cytoplasm</location>
    </subcellularLocation>
</comment>
<comment type="similarity">
    <text evidence="1">Belongs to the DapA family.</text>
</comment>
<comment type="caution">
    <text evidence="2">Was originally thought to be a dihydrodipicolinate synthase (DHDPS), catalyzing the condensation of (S)-aspartate-beta-semialdehyde [(S)-ASA] and pyruvate to dihydrodipicolinate (DHDP). However, it was shown in E.coli that the product of the enzymatic reaction is not dihydrodipicolinate but in fact (4S)-4-hydroxy-2,3,4,5-tetrahydro-(2S)-dipicolinic acid (HTPA), and that the consecutive dehydration reaction leading to DHDP is not spontaneous but catalyzed by DapB.</text>
</comment>
<sequence>MSPAAELSPTPFGRLLTAMVTPFDAEGRVDFALAGRLARHLVEEGSEGLVVCGTTGESPTLSWQEQVKMLEVVRQAVGPGVKVLAGTGSNSTGEAVKATREAAASGADGALVVVPYYNKPPQEGLEAHFRAIANAAPELPLMLYNVPGRTGTSLAPATAAQLMNCANVVSFKAASGSIEEVTELRLACGPRLAVYSGDDGLLLPMLSAGAVGVVSVASHVVGRRLRHMIDAYLSGQNAVALGQHEQLTPLFQALFATSNPIPVKAALELSGWPVGAPRLPLLPLNSAMRDSLADLLTALRQT</sequence>
<name>DAPA_SYNS3</name>
<protein>
    <recommendedName>
        <fullName evidence="1">4-hydroxy-tetrahydrodipicolinate synthase</fullName>
        <shortName evidence="1">HTPA synthase</shortName>
        <ecNumber evidence="1">4.3.3.7</ecNumber>
    </recommendedName>
</protein>
<reference key="1">
    <citation type="journal article" date="2006" name="Proc. Natl. Acad. Sci. U.S.A.">
        <title>Genome sequence of Synechococcus CC9311: insights into adaptation to a coastal environment.</title>
        <authorList>
            <person name="Palenik B."/>
            <person name="Ren Q."/>
            <person name="Dupont C.L."/>
            <person name="Myers G.S."/>
            <person name="Heidelberg J.F."/>
            <person name="Badger J.H."/>
            <person name="Madupu R."/>
            <person name="Nelson W.C."/>
            <person name="Brinkac L.M."/>
            <person name="Dodson R.J."/>
            <person name="Durkin A.S."/>
            <person name="Daugherty S.C."/>
            <person name="Sullivan S.A."/>
            <person name="Khouri H."/>
            <person name="Mohamoud Y."/>
            <person name="Halpin R."/>
            <person name="Paulsen I.T."/>
        </authorList>
    </citation>
    <scope>NUCLEOTIDE SEQUENCE [LARGE SCALE GENOMIC DNA]</scope>
    <source>
        <strain>CC9311</strain>
    </source>
</reference>
<dbReference type="EC" id="4.3.3.7" evidence="1"/>
<dbReference type="EMBL" id="CP000435">
    <property type="protein sequence ID" value="ABI45252.1"/>
    <property type="molecule type" value="Genomic_DNA"/>
</dbReference>
<dbReference type="RefSeq" id="WP_011618057.1">
    <property type="nucleotide sequence ID" value="NC_008319.1"/>
</dbReference>
<dbReference type="SMR" id="Q0IE16"/>
<dbReference type="STRING" id="64471.sync_0068"/>
<dbReference type="KEGG" id="syg:sync_0068"/>
<dbReference type="eggNOG" id="COG0329">
    <property type="taxonomic scope" value="Bacteria"/>
</dbReference>
<dbReference type="HOGENOM" id="CLU_049343_7_1_3"/>
<dbReference type="OrthoDB" id="9782828at2"/>
<dbReference type="UniPathway" id="UPA00034">
    <property type="reaction ID" value="UER00017"/>
</dbReference>
<dbReference type="Proteomes" id="UP000001961">
    <property type="component" value="Chromosome"/>
</dbReference>
<dbReference type="GO" id="GO:0005829">
    <property type="term" value="C:cytosol"/>
    <property type="evidence" value="ECO:0007669"/>
    <property type="project" value="TreeGrafter"/>
</dbReference>
<dbReference type="GO" id="GO:0008840">
    <property type="term" value="F:4-hydroxy-tetrahydrodipicolinate synthase activity"/>
    <property type="evidence" value="ECO:0007669"/>
    <property type="project" value="UniProtKB-UniRule"/>
</dbReference>
<dbReference type="GO" id="GO:0019877">
    <property type="term" value="P:diaminopimelate biosynthetic process"/>
    <property type="evidence" value="ECO:0007669"/>
    <property type="project" value="UniProtKB-UniRule"/>
</dbReference>
<dbReference type="GO" id="GO:0009089">
    <property type="term" value="P:lysine biosynthetic process via diaminopimelate"/>
    <property type="evidence" value="ECO:0007669"/>
    <property type="project" value="UniProtKB-UniRule"/>
</dbReference>
<dbReference type="CDD" id="cd00950">
    <property type="entry name" value="DHDPS"/>
    <property type="match status" value="1"/>
</dbReference>
<dbReference type="Gene3D" id="3.20.20.70">
    <property type="entry name" value="Aldolase class I"/>
    <property type="match status" value="1"/>
</dbReference>
<dbReference type="HAMAP" id="MF_00418">
    <property type="entry name" value="DapA"/>
    <property type="match status" value="1"/>
</dbReference>
<dbReference type="InterPro" id="IPR013785">
    <property type="entry name" value="Aldolase_TIM"/>
</dbReference>
<dbReference type="InterPro" id="IPR005263">
    <property type="entry name" value="DapA"/>
</dbReference>
<dbReference type="InterPro" id="IPR002220">
    <property type="entry name" value="DapA-like"/>
</dbReference>
<dbReference type="InterPro" id="IPR020625">
    <property type="entry name" value="Schiff_base-form_aldolases_AS"/>
</dbReference>
<dbReference type="InterPro" id="IPR020624">
    <property type="entry name" value="Schiff_base-form_aldolases_CS"/>
</dbReference>
<dbReference type="NCBIfam" id="TIGR00674">
    <property type="entry name" value="dapA"/>
    <property type="match status" value="1"/>
</dbReference>
<dbReference type="PANTHER" id="PTHR12128:SF66">
    <property type="entry name" value="4-HYDROXY-2-OXOGLUTARATE ALDOLASE, MITOCHONDRIAL"/>
    <property type="match status" value="1"/>
</dbReference>
<dbReference type="PANTHER" id="PTHR12128">
    <property type="entry name" value="DIHYDRODIPICOLINATE SYNTHASE"/>
    <property type="match status" value="1"/>
</dbReference>
<dbReference type="Pfam" id="PF00701">
    <property type="entry name" value="DHDPS"/>
    <property type="match status" value="1"/>
</dbReference>
<dbReference type="PIRSF" id="PIRSF001365">
    <property type="entry name" value="DHDPS"/>
    <property type="match status" value="1"/>
</dbReference>
<dbReference type="PRINTS" id="PR00146">
    <property type="entry name" value="DHPICSNTHASE"/>
</dbReference>
<dbReference type="SMART" id="SM01130">
    <property type="entry name" value="DHDPS"/>
    <property type="match status" value="1"/>
</dbReference>
<dbReference type="SUPFAM" id="SSF51569">
    <property type="entry name" value="Aldolase"/>
    <property type="match status" value="1"/>
</dbReference>
<dbReference type="PROSITE" id="PS00665">
    <property type="entry name" value="DHDPS_1"/>
    <property type="match status" value="1"/>
</dbReference>
<dbReference type="PROSITE" id="PS00666">
    <property type="entry name" value="DHDPS_2"/>
    <property type="match status" value="1"/>
</dbReference>
<evidence type="ECO:0000255" key="1">
    <source>
        <dbReference type="HAMAP-Rule" id="MF_00418"/>
    </source>
</evidence>
<evidence type="ECO:0000305" key="2"/>
<proteinExistence type="inferred from homology"/>
<gene>
    <name evidence="1" type="primary">dapA</name>
    <name type="ordered locus">sync_0068</name>
</gene>
<organism>
    <name type="scientific">Synechococcus sp. (strain CC9311)</name>
    <dbReference type="NCBI Taxonomy" id="64471"/>
    <lineage>
        <taxon>Bacteria</taxon>
        <taxon>Bacillati</taxon>
        <taxon>Cyanobacteriota</taxon>
        <taxon>Cyanophyceae</taxon>
        <taxon>Synechococcales</taxon>
        <taxon>Synechococcaceae</taxon>
        <taxon>Synechococcus</taxon>
    </lineage>
</organism>
<accession>Q0IE16</accession>